<dbReference type="PIR" id="S16367">
    <property type="entry name" value="HBLZC"/>
</dbReference>
<dbReference type="SMR" id="P18993"/>
<dbReference type="GO" id="GO:0072562">
    <property type="term" value="C:blood microparticle"/>
    <property type="evidence" value="ECO:0007669"/>
    <property type="project" value="TreeGrafter"/>
</dbReference>
<dbReference type="GO" id="GO:0031838">
    <property type="term" value="C:haptoglobin-hemoglobin complex"/>
    <property type="evidence" value="ECO:0007669"/>
    <property type="project" value="TreeGrafter"/>
</dbReference>
<dbReference type="GO" id="GO:0005833">
    <property type="term" value="C:hemoglobin complex"/>
    <property type="evidence" value="ECO:0007669"/>
    <property type="project" value="InterPro"/>
</dbReference>
<dbReference type="GO" id="GO:0031720">
    <property type="term" value="F:haptoglobin binding"/>
    <property type="evidence" value="ECO:0007669"/>
    <property type="project" value="TreeGrafter"/>
</dbReference>
<dbReference type="GO" id="GO:0020037">
    <property type="term" value="F:heme binding"/>
    <property type="evidence" value="ECO:0007669"/>
    <property type="project" value="InterPro"/>
</dbReference>
<dbReference type="GO" id="GO:0046872">
    <property type="term" value="F:metal ion binding"/>
    <property type="evidence" value="ECO:0007669"/>
    <property type="project" value="UniProtKB-KW"/>
</dbReference>
<dbReference type="GO" id="GO:0043177">
    <property type="term" value="F:organic acid binding"/>
    <property type="evidence" value="ECO:0007669"/>
    <property type="project" value="TreeGrafter"/>
</dbReference>
<dbReference type="GO" id="GO:0019825">
    <property type="term" value="F:oxygen binding"/>
    <property type="evidence" value="ECO:0007669"/>
    <property type="project" value="InterPro"/>
</dbReference>
<dbReference type="GO" id="GO:0005344">
    <property type="term" value="F:oxygen carrier activity"/>
    <property type="evidence" value="ECO:0007669"/>
    <property type="project" value="UniProtKB-KW"/>
</dbReference>
<dbReference type="GO" id="GO:0004601">
    <property type="term" value="F:peroxidase activity"/>
    <property type="evidence" value="ECO:0007669"/>
    <property type="project" value="TreeGrafter"/>
</dbReference>
<dbReference type="GO" id="GO:0042744">
    <property type="term" value="P:hydrogen peroxide catabolic process"/>
    <property type="evidence" value="ECO:0007669"/>
    <property type="project" value="TreeGrafter"/>
</dbReference>
<dbReference type="CDD" id="cd08925">
    <property type="entry name" value="Hb-beta-like"/>
    <property type="match status" value="1"/>
</dbReference>
<dbReference type="FunFam" id="1.10.490.10:FF:000001">
    <property type="entry name" value="Hemoglobin subunit beta"/>
    <property type="match status" value="1"/>
</dbReference>
<dbReference type="Gene3D" id="1.10.490.10">
    <property type="entry name" value="Globins"/>
    <property type="match status" value="1"/>
</dbReference>
<dbReference type="InterPro" id="IPR000971">
    <property type="entry name" value="Globin"/>
</dbReference>
<dbReference type="InterPro" id="IPR009050">
    <property type="entry name" value="Globin-like_sf"/>
</dbReference>
<dbReference type="InterPro" id="IPR012292">
    <property type="entry name" value="Globin/Proto"/>
</dbReference>
<dbReference type="InterPro" id="IPR002337">
    <property type="entry name" value="Hemoglobin_b"/>
</dbReference>
<dbReference type="InterPro" id="IPR050056">
    <property type="entry name" value="Hemoglobin_oxygen_transport"/>
</dbReference>
<dbReference type="PANTHER" id="PTHR11442">
    <property type="entry name" value="HEMOGLOBIN FAMILY MEMBER"/>
    <property type="match status" value="1"/>
</dbReference>
<dbReference type="PANTHER" id="PTHR11442:SF7">
    <property type="entry name" value="HEMOGLOBIN SUBUNIT EPSILON"/>
    <property type="match status" value="1"/>
</dbReference>
<dbReference type="Pfam" id="PF00042">
    <property type="entry name" value="Globin"/>
    <property type="match status" value="1"/>
</dbReference>
<dbReference type="PRINTS" id="PR00814">
    <property type="entry name" value="BETAHAEM"/>
</dbReference>
<dbReference type="SUPFAM" id="SSF46458">
    <property type="entry name" value="Globin-like"/>
    <property type="match status" value="1"/>
</dbReference>
<dbReference type="PROSITE" id="PS01033">
    <property type="entry name" value="GLOBIN"/>
    <property type="match status" value="1"/>
</dbReference>
<organism>
    <name type="scientific">Varanus albigularis</name>
    <name type="common">White-throated monitor</name>
    <name type="synonym">Varanus exanthematicus albigularis</name>
    <dbReference type="NCBI Taxonomy" id="8558"/>
    <lineage>
        <taxon>Eukaryota</taxon>
        <taxon>Metazoa</taxon>
        <taxon>Chordata</taxon>
        <taxon>Craniata</taxon>
        <taxon>Vertebrata</taxon>
        <taxon>Euteleostomi</taxon>
        <taxon>Lepidosauria</taxon>
        <taxon>Squamata</taxon>
        <taxon>Bifurcata</taxon>
        <taxon>Unidentata</taxon>
        <taxon>Episquamata</taxon>
        <taxon>Toxicofera</taxon>
        <taxon>Anguimorpha</taxon>
        <taxon>Paleoanguimorpha</taxon>
        <taxon>Varanoidea</taxon>
        <taxon>Varanidae</taxon>
        <taxon>Varanus</taxon>
    </lineage>
</organism>
<evidence type="ECO:0000255" key="1">
    <source>
        <dbReference type="PROSITE-ProRule" id="PRU00238"/>
    </source>
</evidence>
<name>HBB1_VARAL</name>
<proteinExistence type="evidence at protein level"/>
<feature type="chain" id="PRO_0000053150" description="Hemoglobin subunit beta-1">
    <location>
        <begin position="1"/>
        <end position="146"/>
    </location>
</feature>
<feature type="domain" description="Globin" evidence="1">
    <location>
        <begin position="2"/>
        <end position="146"/>
    </location>
</feature>
<feature type="binding site" description="distal binding residue">
    <location>
        <position position="63"/>
    </location>
    <ligand>
        <name>heme b</name>
        <dbReference type="ChEBI" id="CHEBI:60344"/>
    </ligand>
    <ligandPart>
        <name>Fe</name>
        <dbReference type="ChEBI" id="CHEBI:18248"/>
    </ligandPart>
</feature>
<feature type="binding site" description="proximal binding residue">
    <location>
        <position position="92"/>
    </location>
    <ligand>
        <name>heme b</name>
        <dbReference type="ChEBI" id="CHEBI:60344"/>
    </ligand>
    <ligandPart>
        <name>Fe</name>
        <dbReference type="ChEBI" id="CHEBI:18248"/>
    </ligandPart>
</feature>
<reference key="1">
    <citation type="journal article" date="1991" name="Biol. Chem. Hoppe-Seyler">
        <title>Primary structure of hemoglobin from monitor lizard (Varanus exanthematicus albigularis -- Squamata).</title>
        <authorList>
            <person name="Abbasi A."/>
            <person name="Braunitzer G."/>
        </authorList>
    </citation>
    <scope>PROTEIN SEQUENCE</scope>
</reference>
<reference key="2">
    <citation type="book" date="1988" name="Protein structure-function relationship">
        <title>Hemoglobin -- structure, physiology and evolution.</title>
        <editorList>
            <person name="Zaidi Z.H."/>
        </editorList>
        <authorList>
            <person name="Abbasi A."/>
            <person name="Braunitzer G."/>
        </authorList>
    </citation>
    <scope>PROTEIN SEQUENCE</scope>
</reference>
<comment type="function">
    <text>Involved in oxygen transport from the lung to the various peripheral tissues.</text>
</comment>
<comment type="subunit">
    <text>The major hemoglobin component (HbIII) is a tetramer of two alpha-2 chains and two beta-1 chains.</text>
</comment>
<comment type="tissue specificity">
    <text>Red blood cells.</text>
</comment>
<comment type="similarity">
    <text evidence="1">Belongs to the globin family.</text>
</comment>
<gene>
    <name type="primary">HBB1</name>
</gene>
<keyword id="KW-0903">Direct protein sequencing</keyword>
<keyword id="KW-0349">Heme</keyword>
<keyword id="KW-0408">Iron</keyword>
<keyword id="KW-0479">Metal-binding</keyword>
<keyword id="KW-0561">Oxygen transport</keyword>
<keyword id="KW-0813">Transport</keyword>
<protein>
    <recommendedName>
        <fullName>Hemoglobin subunit beta-1</fullName>
    </recommendedName>
    <alternativeName>
        <fullName>Beta-1-globin</fullName>
    </alternativeName>
    <alternativeName>
        <fullName>Hemoglobin beta-1 chain</fullName>
    </alternativeName>
    <alternativeName>
        <fullName>Hemoglobin beta-I chain</fullName>
    </alternativeName>
</protein>
<accession>P18993</accession>
<sequence length="146" mass="16193">VHWTAEEKQLICSLWGKIDVGLIGGETLAGLLVIYPWTQRQFSHFGNLSSPTAIAGNPRVKAHGKKVLTSFGDAIKNLDNIKDTFAKLSELHCDKLHVDPTNFKLLGNVLVIVLADHHGKEFTPAHHAAYQKLVNVVSHSLARRYH</sequence>